<dbReference type="EMBL" id="EU835853">
    <property type="protein sequence ID" value="ACH41076.1"/>
    <property type="molecule type" value="Genomic_DNA"/>
</dbReference>
<dbReference type="RefSeq" id="YP_002149739.1">
    <property type="nucleotide sequence ID" value="NC_011163.1"/>
</dbReference>
<dbReference type="SMR" id="B5LMN0"/>
<dbReference type="GeneID" id="6797512"/>
<dbReference type="KEGG" id="cam:6797512"/>
<dbReference type="OrthoDB" id="1900203at2759"/>
<dbReference type="Proteomes" id="UP000087171">
    <property type="component" value="Chloroplast Pltd"/>
</dbReference>
<dbReference type="GO" id="GO:0009535">
    <property type="term" value="C:chloroplast thylakoid membrane"/>
    <property type="evidence" value="ECO:0007669"/>
    <property type="project" value="UniProtKB-SubCell"/>
</dbReference>
<dbReference type="GO" id="GO:0045259">
    <property type="term" value="C:proton-transporting ATP synthase complex"/>
    <property type="evidence" value="ECO:0007669"/>
    <property type="project" value="UniProtKB-KW"/>
</dbReference>
<dbReference type="GO" id="GO:0046933">
    <property type="term" value="F:proton-transporting ATP synthase activity, rotational mechanism"/>
    <property type="evidence" value="ECO:0007669"/>
    <property type="project" value="UniProtKB-UniRule"/>
</dbReference>
<dbReference type="CDD" id="cd06503">
    <property type="entry name" value="ATP-synt_Fo_b"/>
    <property type="match status" value="1"/>
</dbReference>
<dbReference type="HAMAP" id="MF_01398">
    <property type="entry name" value="ATP_synth_b_bprime"/>
    <property type="match status" value="1"/>
</dbReference>
<dbReference type="InterPro" id="IPR002146">
    <property type="entry name" value="ATP_synth_b/b'su_bac/chlpt"/>
</dbReference>
<dbReference type="PANTHER" id="PTHR34264">
    <property type="entry name" value="ATP SYNTHASE SUBUNIT B, CHLOROPLASTIC"/>
    <property type="match status" value="1"/>
</dbReference>
<dbReference type="PANTHER" id="PTHR34264:SF3">
    <property type="entry name" value="ATP SYNTHASE SUBUNIT B, CHLOROPLASTIC"/>
    <property type="match status" value="1"/>
</dbReference>
<dbReference type="Pfam" id="PF00430">
    <property type="entry name" value="ATP-synt_B"/>
    <property type="match status" value="1"/>
</dbReference>
<keyword id="KW-0066">ATP synthesis</keyword>
<keyword id="KW-0138">CF(0)</keyword>
<keyword id="KW-0150">Chloroplast</keyword>
<keyword id="KW-0375">Hydrogen ion transport</keyword>
<keyword id="KW-0406">Ion transport</keyword>
<keyword id="KW-0472">Membrane</keyword>
<keyword id="KW-0934">Plastid</keyword>
<keyword id="KW-1185">Reference proteome</keyword>
<keyword id="KW-0793">Thylakoid</keyword>
<keyword id="KW-0812">Transmembrane</keyword>
<keyword id="KW-1133">Transmembrane helix</keyword>
<keyword id="KW-0813">Transport</keyword>
<comment type="function">
    <text evidence="1">F(1)F(0) ATP synthase produces ATP from ADP in the presence of a proton or sodium gradient. F-type ATPases consist of two structural domains, F(1) containing the extramembraneous catalytic core and F(0) containing the membrane proton channel, linked together by a central stalk and a peripheral stalk. During catalysis, ATP synthesis in the catalytic domain of F(1) is coupled via a rotary mechanism of the central stalk subunits to proton translocation.</text>
</comment>
<comment type="function">
    <text evidence="1">Component of the F(0) channel, it forms part of the peripheral stalk, linking F(1) to F(0).</text>
</comment>
<comment type="subunit">
    <text evidence="1">F-type ATPases have 2 components, F(1) - the catalytic core - and F(0) - the membrane proton channel. F(1) has five subunits: alpha(3), beta(3), gamma(1), delta(1), epsilon(1). F(0) has four main subunits: a(1), b(1), b'(1) and c(10-14). The alpha and beta chains form an alternating ring which encloses part of the gamma chain. F(1) is attached to F(0) by a central stalk formed by the gamma and epsilon chains, while a peripheral stalk is formed by the delta, b and b' chains.</text>
</comment>
<comment type="subcellular location">
    <subcellularLocation>
        <location evidence="1">Plastid</location>
        <location evidence="1">Chloroplast thylakoid membrane</location>
        <topology evidence="1">Single-pass membrane protein</topology>
    </subcellularLocation>
</comment>
<comment type="miscellaneous">
    <text>In plastids the F-type ATPase is also known as CF(1)CF(0).</text>
</comment>
<comment type="similarity">
    <text evidence="1">Belongs to the ATPase B chain family.</text>
</comment>
<organism>
    <name type="scientific">Cicer arietinum</name>
    <name type="common">Chickpea</name>
    <name type="synonym">Garbanzo</name>
    <dbReference type="NCBI Taxonomy" id="3827"/>
    <lineage>
        <taxon>Eukaryota</taxon>
        <taxon>Viridiplantae</taxon>
        <taxon>Streptophyta</taxon>
        <taxon>Embryophyta</taxon>
        <taxon>Tracheophyta</taxon>
        <taxon>Spermatophyta</taxon>
        <taxon>Magnoliopsida</taxon>
        <taxon>eudicotyledons</taxon>
        <taxon>Gunneridae</taxon>
        <taxon>Pentapetalae</taxon>
        <taxon>rosids</taxon>
        <taxon>fabids</taxon>
        <taxon>Fabales</taxon>
        <taxon>Fabaceae</taxon>
        <taxon>Papilionoideae</taxon>
        <taxon>50 kb inversion clade</taxon>
        <taxon>NPAAA clade</taxon>
        <taxon>Hologalegina</taxon>
        <taxon>IRL clade</taxon>
        <taxon>Cicereae</taxon>
        <taxon>Cicer</taxon>
    </lineage>
</organism>
<protein>
    <recommendedName>
        <fullName evidence="1">ATP synthase subunit b, chloroplastic</fullName>
    </recommendedName>
    <alternativeName>
        <fullName evidence="1">ATP synthase F(0) sector subunit b</fullName>
    </alternativeName>
    <alternativeName>
        <fullName evidence="1">ATPase subunit I</fullName>
    </alternativeName>
</protein>
<reference key="1">
    <citation type="journal article" date="2008" name="Mol. Phylogenet. Evol.">
        <title>Complete plastid genome sequence of the chickpea (Cicer arietinum) and the phylogenetic distribution of rps12 and clpP intron losses among legumes (Leguminosae).</title>
        <authorList>
            <person name="Jansen R.K."/>
            <person name="Wojciechowski M.F."/>
            <person name="Sanniyasi E."/>
            <person name="Lee S.-B."/>
            <person name="Daniell H."/>
        </authorList>
    </citation>
    <scope>NUCLEOTIDE SEQUENCE [LARGE SCALE GENOMIC DNA]</scope>
</reference>
<name>ATPF_CICAR</name>
<accession>B5LMN0</accession>
<feature type="chain" id="PRO_0000368919" description="ATP synthase subunit b, chloroplastic">
    <location>
        <begin position="1"/>
        <end position="184"/>
    </location>
</feature>
<feature type="transmembrane region" description="Helical" evidence="1">
    <location>
        <begin position="27"/>
        <end position="49"/>
    </location>
</feature>
<evidence type="ECO:0000255" key="1">
    <source>
        <dbReference type="HAMAP-Rule" id="MF_01398"/>
    </source>
</evidence>
<gene>
    <name evidence="1" type="primary">atpF</name>
</gene>
<geneLocation type="chloroplast"/>
<proteinExistence type="inferred from homology"/>
<sequence>MKNITDSFLCLSYWPSAGSFGFDTDILATNLINLSVVLGVLVFFGKGVLTDLLDNRKQRILRTIRNSEELREGAVEQLEKARARLRKIEMEADRFRLNGYSEIEREKLNLINSIYTTLEQFENYKNETINFEQQKAINQVQQRVLQQALQGALGTLNSCLNNELHLRTIGANIGMFGAMKEKNN</sequence>